<dbReference type="EMBL" id="AF274444">
    <property type="protein sequence ID" value="AAK17087.1"/>
    <property type="molecule type" value="Genomic_DNA"/>
</dbReference>
<dbReference type="SMR" id="Q9AIF9"/>
<dbReference type="GO" id="GO:0022627">
    <property type="term" value="C:cytosolic small ribosomal subunit"/>
    <property type="evidence" value="ECO:0007669"/>
    <property type="project" value="TreeGrafter"/>
</dbReference>
<dbReference type="GO" id="GO:0003729">
    <property type="term" value="F:mRNA binding"/>
    <property type="evidence" value="ECO:0007669"/>
    <property type="project" value="UniProtKB-UniRule"/>
</dbReference>
<dbReference type="GO" id="GO:0019843">
    <property type="term" value="F:rRNA binding"/>
    <property type="evidence" value="ECO:0007669"/>
    <property type="project" value="UniProtKB-KW"/>
</dbReference>
<dbReference type="GO" id="GO:0003735">
    <property type="term" value="F:structural constituent of ribosome"/>
    <property type="evidence" value="ECO:0007669"/>
    <property type="project" value="InterPro"/>
</dbReference>
<dbReference type="GO" id="GO:0006412">
    <property type="term" value="P:translation"/>
    <property type="evidence" value="ECO:0007669"/>
    <property type="project" value="UniProtKB-UniRule"/>
</dbReference>
<dbReference type="Gene3D" id="3.30.1140.32">
    <property type="entry name" value="Ribosomal protein S3, C-terminal domain"/>
    <property type="match status" value="1"/>
</dbReference>
<dbReference type="HAMAP" id="MF_01309_B">
    <property type="entry name" value="Ribosomal_uS3_B"/>
    <property type="match status" value="1"/>
</dbReference>
<dbReference type="InterPro" id="IPR009019">
    <property type="entry name" value="KH_sf_prok-type"/>
</dbReference>
<dbReference type="InterPro" id="IPR036419">
    <property type="entry name" value="Ribosomal_S3_C_sf"/>
</dbReference>
<dbReference type="InterPro" id="IPR005704">
    <property type="entry name" value="Ribosomal_uS3_bac-typ"/>
</dbReference>
<dbReference type="InterPro" id="IPR001351">
    <property type="entry name" value="Ribosomal_uS3_C"/>
</dbReference>
<dbReference type="InterPro" id="IPR018280">
    <property type="entry name" value="Ribosomal_uS3_CS"/>
</dbReference>
<dbReference type="NCBIfam" id="TIGR01009">
    <property type="entry name" value="rpsC_bact"/>
    <property type="match status" value="1"/>
</dbReference>
<dbReference type="PANTHER" id="PTHR11760">
    <property type="entry name" value="30S/40S RIBOSOMAL PROTEIN S3"/>
    <property type="match status" value="1"/>
</dbReference>
<dbReference type="PANTHER" id="PTHR11760:SF19">
    <property type="entry name" value="SMALL RIBOSOMAL SUBUNIT PROTEIN US3C"/>
    <property type="match status" value="1"/>
</dbReference>
<dbReference type="Pfam" id="PF00189">
    <property type="entry name" value="Ribosomal_S3_C"/>
    <property type="match status" value="1"/>
</dbReference>
<dbReference type="SUPFAM" id="SSF54814">
    <property type="entry name" value="Prokaryotic type KH domain (KH-domain type II)"/>
    <property type="match status" value="1"/>
</dbReference>
<dbReference type="SUPFAM" id="SSF54821">
    <property type="entry name" value="Ribosomal protein S3 C-terminal domain"/>
    <property type="match status" value="1"/>
</dbReference>
<dbReference type="PROSITE" id="PS00548">
    <property type="entry name" value="RIBOSOMAL_S3"/>
    <property type="match status" value="1"/>
</dbReference>
<organism>
    <name type="scientific">Carsonella ruddii</name>
    <dbReference type="NCBI Taxonomy" id="114186"/>
    <lineage>
        <taxon>Bacteria</taxon>
        <taxon>Pseudomonadati</taxon>
        <taxon>Pseudomonadota</taxon>
        <taxon>Gammaproteobacteria</taxon>
        <taxon>Oceanospirillales</taxon>
        <taxon>Halomonadaceae</taxon>
        <taxon>Zymobacter group</taxon>
        <taxon>Candidatus Carsonella</taxon>
    </lineage>
</organism>
<keyword id="KW-0687">Ribonucleoprotein</keyword>
<keyword id="KW-0689">Ribosomal protein</keyword>
<keyword id="KW-0694">RNA-binding</keyword>
<keyword id="KW-0699">rRNA-binding</keyword>
<reference key="1">
    <citation type="journal article" date="2001" name="J. Bacteriol.">
        <title>Degenerative minimalism in the genome of a psyllid endosymbiont.</title>
        <authorList>
            <person name="Clark M.A."/>
            <person name="Baumann L."/>
            <person name="Thao M.L."/>
            <person name="Moran N.A."/>
            <person name="Baumann P."/>
        </authorList>
    </citation>
    <scope>NUCLEOTIDE SEQUENCE [GENOMIC DNA]</scope>
</reference>
<proteinExistence type="inferred from homology"/>
<name>RS3_CARRU</name>
<protein>
    <recommendedName>
        <fullName evidence="1">Small ribosomal subunit protein uS3</fullName>
    </recommendedName>
    <alternativeName>
        <fullName evidence="2">30S ribosomal protein S3</fullName>
    </alternativeName>
</protein>
<sequence>MGKKINPILFRLKKNTVYHSLWYTFKKNFCYYLKCDILIREIIRRNFLFINLSYIDIIISNKLTINLYINNVDQFNIIENYLDVFVFQISKILKKNVILNFVFNHVLNAKNIAYNVVNQILNKNSIKKIIKEELLKNRKNFGCKIQISGRLEGVDIARKEWSLIGRIPLHTIKYNLEYYQCETLTQYGILGIKIWLFKKNNEK</sequence>
<gene>
    <name evidence="1" type="primary">rpsC</name>
    <name evidence="1" type="synonym">rps3</name>
</gene>
<accession>Q9AIF9</accession>
<feature type="chain" id="PRO_0000130095" description="Small ribosomal subunit protein uS3">
    <location>
        <begin position="1"/>
        <end position="203"/>
    </location>
</feature>
<feature type="domain" description="KH type-2" evidence="1">
    <location>
        <begin position="39"/>
        <end position="113"/>
    </location>
</feature>
<comment type="function">
    <text evidence="1">Binds the lower part of the 30S subunit head. Binds mRNA in the 70S ribosome, positioning it for translation.</text>
</comment>
<comment type="subunit">
    <text evidence="1">Part of the 30S ribosomal subunit. Forms a tight complex with proteins S10 and S14.</text>
</comment>
<comment type="similarity">
    <text evidence="1">Belongs to the universal ribosomal protein uS3 family.</text>
</comment>
<evidence type="ECO:0000255" key="1">
    <source>
        <dbReference type="HAMAP-Rule" id="MF_01309"/>
    </source>
</evidence>
<evidence type="ECO:0000305" key="2"/>